<dbReference type="EMBL" id="AF191796">
    <property type="protein sequence ID" value="AAQ13726.1"/>
    <property type="molecule type" value="Genomic_DNA"/>
</dbReference>
<dbReference type="RefSeq" id="YP_529519.1">
    <property type="nucleotide sequence ID" value="NC_007914.1"/>
</dbReference>
<dbReference type="KEGG" id="vg:5142419"/>
<dbReference type="Proteomes" id="UP000007024">
    <property type="component" value="Segment"/>
</dbReference>
<name>Y07_HIS1I</name>
<protein>
    <recommendedName>
        <fullName>Uncharacterized protein ORF7</fullName>
    </recommendedName>
</protein>
<keyword id="KW-1185">Reference proteome</keyword>
<accession>Q25BI8</accession>
<gene>
    <name type="ORF">ORF7</name>
</gene>
<proteinExistence type="predicted"/>
<reference key="1">
    <citation type="journal article" date="2006" name="Virology">
        <title>His1 and His2 are distantly related, spindle-shaped haloviruses belonging to the novel virus group, Salterprovirus.</title>
        <authorList>
            <person name="Bath C."/>
            <person name="Cukalac T."/>
            <person name="Porter K."/>
            <person name="Dyall-Smith M.L."/>
        </authorList>
    </citation>
    <scope>NUCLEOTIDE SEQUENCE [GENOMIC DNA]</scope>
</reference>
<feature type="chain" id="PRO_0000384904" description="Uncharacterized protein ORF7">
    <location>
        <begin position="1"/>
        <end position="35"/>
    </location>
</feature>
<organismHost>
    <name type="scientific">Haloarcula hispanica</name>
    <dbReference type="NCBI Taxonomy" id="51589"/>
</organismHost>
<sequence length="35" mass="4024">MARKQKTLLCRNCRETKIAVDRVCPTCGCRLVPPY</sequence>
<organism>
    <name type="scientific">His1 virus (isolate Australia/Victoria)</name>
    <name type="common">His1V</name>
    <name type="synonym">Haloarcula hispanica virus 1</name>
    <dbReference type="NCBI Taxonomy" id="654912"/>
    <lineage>
        <taxon>Viruses</taxon>
        <taxon>Viruses incertae sedis</taxon>
        <taxon>Halspiviridae</taxon>
        <taxon>Salterprovirus</taxon>
        <taxon>Salterprovirus His1</taxon>
    </lineage>
</organism>